<feature type="chain" id="PRO_1000006604" description="Cysteine--tRNA ligase">
    <location>
        <begin position="1"/>
        <end position="463"/>
    </location>
</feature>
<feature type="short sequence motif" description="'HIGH' region">
    <location>
        <begin position="31"/>
        <end position="41"/>
    </location>
</feature>
<feature type="short sequence motif" description="'KMSKS' region">
    <location>
        <begin position="285"/>
        <end position="289"/>
    </location>
</feature>
<feature type="binding site" evidence="1">
    <location>
        <position position="29"/>
    </location>
    <ligand>
        <name>Zn(2+)</name>
        <dbReference type="ChEBI" id="CHEBI:29105"/>
    </ligand>
</feature>
<feature type="binding site" evidence="1">
    <location>
        <position position="227"/>
    </location>
    <ligand>
        <name>Zn(2+)</name>
        <dbReference type="ChEBI" id="CHEBI:29105"/>
    </ligand>
</feature>
<feature type="binding site" evidence="1">
    <location>
        <position position="252"/>
    </location>
    <ligand>
        <name>Zn(2+)</name>
        <dbReference type="ChEBI" id="CHEBI:29105"/>
    </ligand>
</feature>
<feature type="binding site" evidence="1">
    <location>
        <position position="256"/>
    </location>
    <ligand>
        <name>Zn(2+)</name>
        <dbReference type="ChEBI" id="CHEBI:29105"/>
    </ligand>
</feature>
<feature type="binding site" evidence="1">
    <location>
        <position position="288"/>
    </location>
    <ligand>
        <name>ATP</name>
        <dbReference type="ChEBI" id="CHEBI:30616"/>
    </ligand>
</feature>
<gene>
    <name evidence="1" type="primary">cysS</name>
    <name type="ordered locus">RPD_2065</name>
</gene>
<evidence type="ECO:0000255" key="1">
    <source>
        <dbReference type="HAMAP-Rule" id="MF_00041"/>
    </source>
</evidence>
<comment type="catalytic activity">
    <reaction evidence="1">
        <text>tRNA(Cys) + L-cysteine + ATP = L-cysteinyl-tRNA(Cys) + AMP + diphosphate</text>
        <dbReference type="Rhea" id="RHEA:17773"/>
        <dbReference type="Rhea" id="RHEA-COMP:9661"/>
        <dbReference type="Rhea" id="RHEA-COMP:9679"/>
        <dbReference type="ChEBI" id="CHEBI:30616"/>
        <dbReference type="ChEBI" id="CHEBI:33019"/>
        <dbReference type="ChEBI" id="CHEBI:35235"/>
        <dbReference type="ChEBI" id="CHEBI:78442"/>
        <dbReference type="ChEBI" id="CHEBI:78517"/>
        <dbReference type="ChEBI" id="CHEBI:456215"/>
        <dbReference type="EC" id="6.1.1.16"/>
    </reaction>
</comment>
<comment type="cofactor">
    <cofactor evidence="1">
        <name>Zn(2+)</name>
        <dbReference type="ChEBI" id="CHEBI:29105"/>
    </cofactor>
    <text evidence="1">Binds 1 zinc ion per subunit.</text>
</comment>
<comment type="subunit">
    <text evidence="1">Monomer.</text>
</comment>
<comment type="subcellular location">
    <subcellularLocation>
        <location evidence="1">Cytoplasm</location>
    </subcellularLocation>
</comment>
<comment type="similarity">
    <text evidence="1">Belongs to the class-I aminoacyl-tRNA synthetase family.</text>
</comment>
<sequence length="463" mass="51614">MALRLYDTLTKEKRDFAPLDPSRVRMYVCGPTVYDFAHIGNARPVIVFDVLFRLLRHLYGENHVKYVRNITDVDDKINDRAARDYPGLPLNESIRKVTEQTERQFHDDVDALGCLRPTVEPRATEHIGEMRTIIDRLVEGGFAYVADDHVLFSPGAMNAADSVLPRYGALANRSLDEMIAGARVDVAPYKRDATDFVLWKPSKPGEPSWPSPAGIATQGRPGWHIECSAMSWKHLGETFDIHGGGIDLVFPHHENEVAQSCCAFHTSRMAQTWMHNGFLQVEGEKMSKSLGNFVTIRELLATEKFGGRKWDGATLRLAMLKTHYRQPIDWTADALHEAEKAIFDWSDFTKDATPGSCDDVIAALTDDLNTPKMIAELHALRRAGKADELCGAMELLGISPVVRGTVDLDATAKSLIDARTAARARKDFKESDRIRDELAAMGIAIKDGKDSDGKPVTTWEIAR</sequence>
<reference key="1">
    <citation type="submission" date="2006-03" db="EMBL/GenBank/DDBJ databases">
        <title>Complete sequence of Rhodopseudomonas palustris BisB5.</title>
        <authorList>
            <consortium name="US DOE Joint Genome Institute"/>
            <person name="Copeland A."/>
            <person name="Lucas S."/>
            <person name="Lapidus A."/>
            <person name="Barry K."/>
            <person name="Detter J.C."/>
            <person name="Glavina del Rio T."/>
            <person name="Hammon N."/>
            <person name="Israni S."/>
            <person name="Dalin E."/>
            <person name="Tice H."/>
            <person name="Pitluck S."/>
            <person name="Chain P."/>
            <person name="Malfatti S."/>
            <person name="Shin M."/>
            <person name="Vergez L."/>
            <person name="Schmutz J."/>
            <person name="Larimer F."/>
            <person name="Land M."/>
            <person name="Hauser L."/>
            <person name="Pelletier D.A."/>
            <person name="Kyrpides N."/>
            <person name="Lykidis A."/>
            <person name="Oda Y."/>
            <person name="Harwood C.S."/>
            <person name="Richardson P."/>
        </authorList>
    </citation>
    <scope>NUCLEOTIDE SEQUENCE [LARGE SCALE GENOMIC DNA]</scope>
    <source>
        <strain>BisB5</strain>
    </source>
</reference>
<organism>
    <name type="scientific">Rhodopseudomonas palustris (strain BisB5)</name>
    <dbReference type="NCBI Taxonomy" id="316057"/>
    <lineage>
        <taxon>Bacteria</taxon>
        <taxon>Pseudomonadati</taxon>
        <taxon>Pseudomonadota</taxon>
        <taxon>Alphaproteobacteria</taxon>
        <taxon>Hyphomicrobiales</taxon>
        <taxon>Nitrobacteraceae</taxon>
        <taxon>Rhodopseudomonas</taxon>
    </lineage>
</organism>
<keyword id="KW-0030">Aminoacyl-tRNA synthetase</keyword>
<keyword id="KW-0067">ATP-binding</keyword>
<keyword id="KW-0963">Cytoplasm</keyword>
<keyword id="KW-0436">Ligase</keyword>
<keyword id="KW-0479">Metal-binding</keyword>
<keyword id="KW-0547">Nucleotide-binding</keyword>
<keyword id="KW-0648">Protein biosynthesis</keyword>
<keyword id="KW-0862">Zinc</keyword>
<name>SYC_RHOPS</name>
<protein>
    <recommendedName>
        <fullName evidence="1">Cysteine--tRNA ligase</fullName>
        <ecNumber evidence="1">6.1.1.16</ecNumber>
    </recommendedName>
    <alternativeName>
        <fullName evidence="1">Cysteinyl-tRNA synthetase</fullName>
        <shortName evidence="1">CysRS</shortName>
    </alternativeName>
</protein>
<proteinExistence type="inferred from homology"/>
<accession>Q139D9</accession>
<dbReference type="EC" id="6.1.1.16" evidence="1"/>
<dbReference type="EMBL" id="CP000283">
    <property type="protein sequence ID" value="ABE39300.1"/>
    <property type="molecule type" value="Genomic_DNA"/>
</dbReference>
<dbReference type="SMR" id="Q139D9"/>
<dbReference type="STRING" id="316057.RPD_2065"/>
<dbReference type="KEGG" id="rpd:RPD_2065"/>
<dbReference type="eggNOG" id="COG0215">
    <property type="taxonomic scope" value="Bacteria"/>
</dbReference>
<dbReference type="HOGENOM" id="CLU_013528_0_1_5"/>
<dbReference type="BioCyc" id="RPAL316057:RPD_RS10365-MONOMER"/>
<dbReference type="Proteomes" id="UP000001818">
    <property type="component" value="Chromosome"/>
</dbReference>
<dbReference type="GO" id="GO:0005829">
    <property type="term" value="C:cytosol"/>
    <property type="evidence" value="ECO:0007669"/>
    <property type="project" value="TreeGrafter"/>
</dbReference>
<dbReference type="GO" id="GO:0005524">
    <property type="term" value="F:ATP binding"/>
    <property type="evidence" value="ECO:0007669"/>
    <property type="project" value="UniProtKB-UniRule"/>
</dbReference>
<dbReference type="GO" id="GO:0004817">
    <property type="term" value="F:cysteine-tRNA ligase activity"/>
    <property type="evidence" value="ECO:0007669"/>
    <property type="project" value="UniProtKB-UniRule"/>
</dbReference>
<dbReference type="GO" id="GO:0008270">
    <property type="term" value="F:zinc ion binding"/>
    <property type="evidence" value="ECO:0007669"/>
    <property type="project" value="UniProtKB-UniRule"/>
</dbReference>
<dbReference type="GO" id="GO:0006423">
    <property type="term" value="P:cysteinyl-tRNA aminoacylation"/>
    <property type="evidence" value="ECO:0007669"/>
    <property type="project" value="UniProtKB-UniRule"/>
</dbReference>
<dbReference type="CDD" id="cd00672">
    <property type="entry name" value="CysRS_core"/>
    <property type="match status" value="1"/>
</dbReference>
<dbReference type="FunFam" id="3.40.50.620:FF:000068">
    <property type="entry name" value="Cysteine--tRNA ligase"/>
    <property type="match status" value="1"/>
</dbReference>
<dbReference type="Gene3D" id="1.20.120.1910">
    <property type="entry name" value="Cysteine-tRNA ligase, C-terminal anti-codon recognition domain"/>
    <property type="match status" value="1"/>
</dbReference>
<dbReference type="Gene3D" id="3.40.50.620">
    <property type="entry name" value="HUPs"/>
    <property type="match status" value="1"/>
</dbReference>
<dbReference type="HAMAP" id="MF_00041">
    <property type="entry name" value="Cys_tRNA_synth"/>
    <property type="match status" value="1"/>
</dbReference>
<dbReference type="InterPro" id="IPR015803">
    <property type="entry name" value="Cys-tRNA-ligase"/>
</dbReference>
<dbReference type="InterPro" id="IPR024909">
    <property type="entry name" value="Cys-tRNA/MSH_ligase"/>
</dbReference>
<dbReference type="InterPro" id="IPR056411">
    <property type="entry name" value="CysS_C"/>
</dbReference>
<dbReference type="InterPro" id="IPR014729">
    <property type="entry name" value="Rossmann-like_a/b/a_fold"/>
</dbReference>
<dbReference type="InterPro" id="IPR032678">
    <property type="entry name" value="tRNA-synt_1_cat_dom"/>
</dbReference>
<dbReference type="InterPro" id="IPR009080">
    <property type="entry name" value="tRNAsynth_Ia_anticodon-bd"/>
</dbReference>
<dbReference type="NCBIfam" id="TIGR00435">
    <property type="entry name" value="cysS"/>
    <property type="match status" value="1"/>
</dbReference>
<dbReference type="PANTHER" id="PTHR10890:SF3">
    <property type="entry name" value="CYSTEINE--TRNA LIGASE, CYTOPLASMIC"/>
    <property type="match status" value="1"/>
</dbReference>
<dbReference type="PANTHER" id="PTHR10890">
    <property type="entry name" value="CYSTEINYL-TRNA SYNTHETASE"/>
    <property type="match status" value="1"/>
</dbReference>
<dbReference type="Pfam" id="PF23493">
    <property type="entry name" value="CysS_C"/>
    <property type="match status" value="1"/>
</dbReference>
<dbReference type="Pfam" id="PF01406">
    <property type="entry name" value="tRNA-synt_1e"/>
    <property type="match status" value="1"/>
</dbReference>
<dbReference type="PRINTS" id="PR00983">
    <property type="entry name" value="TRNASYNTHCYS"/>
</dbReference>
<dbReference type="SUPFAM" id="SSF47323">
    <property type="entry name" value="Anticodon-binding domain of a subclass of class I aminoacyl-tRNA synthetases"/>
    <property type="match status" value="1"/>
</dbReference>
<dbReference type="SUPFAM" id="SSF52374">
    <property type="entry name" value="Nucleotidylyl transferase"/>
    <property type="match status" value="1"/>
</dbReference>